<sequence length="214" mass="23537">MSGATKFIKCVTVGDGAVGKTCMLICYTSNKFPTDYIPTVFDNFSANVSVDGNIVNLGLWDTAGQEDYSRLRPLSYRGADIFVLAFSLISRASYENVLKKWMPELRRFAPNVPIVLVGTKLDLRDHRSYLADHPAASAITTAQGEELRKQIGAAAYIECSSKTQQNIKAVFDTAIKVVLQPPRRRGETTMARKKTRRSTGCSLKNLMCGSACVV</sequence>
<accession>Q68Y52</accession>
<accession>Q0DGS9</accession>
<accession>Q9SSW9</accession>
<dbReference type="EMBL" id="AB029509">
    <property type="protein sequence ID" value="BAA84493.1"/>
    <property type="molecule type" value="mRNA"/>
</dbReference>
<dbReference type="EMBL" id="AC130604">
    <property type="protein sequence ID" value="AAV59301.1"/>
    <property type="molecule type" value="Genomic_DNA"/>
</dbReference>
<dbReference type="EMBL" id="AC132485">
    <property type="protein sequence ID" value="AAU03100.1"/>
    <property type="molecule type" value="Genomic_DNA"/>
</dbReference>
<dbReference type="EMBL" id="AP008211">
    <property type="protein sequence ID" value="BAF17944.1"/>
    <property type="molecule type" value="Genomic_DNA"/>
</dbReference>
<dbReference type="EMBL" id="AP014961">
    <property type="protein sequence ID" value="BAS94867.1"/>
    <property type="molecule type" value="Genomic_DNA"/>
</dbReference>
<dbReference type="EMBL" id="CM000142">
    <property type="protein sequence ID" value="EEE64345.1"/>
    <property type="molecule type" value="Genomic_DNA"/>
</dbReference>
<dbReference type="RefSeq" id="XP_015638759.1">
    <property type="nucleotide sequence ID" value="XM_015783273.1"/>
</dbReference>
<dbReference type="SMR" id="Q68Y52"/>
<dbReference type="FunCoup" id="Q68Y52">
    <property type="interactions" value="2160"/>
</dbReference>
<dbReference type="STRING" id="39947.Q68Y52"/>
<dbReference type="PaxDb" id="39947-Q68Y52"/>
<dbReference type="EnsemblPlants" id="Os05t0513800-01">
    <property type="protein sequence ID" value="Os05t0513800-01"/>
    <property type="gene ID" value="Os05g0513800"/>
</dbReference>
<dbReference type="Gramene" id="Os05t0513800-01">
    <property type="protein sequence ID" value="Os05t0513800-01"/>
    <property type="gene ID" value="Os05g0513800"/>
</dbReference>
<dbReference type="KEGG" id="dosa:Os05g0513800"/>
<dbReference type="eggNOG" id="KOG0393">
    <property type="taxonomic scope" value="Eukaryota"/>
</dbReference>
<dbReference type="HOGENOM" id="CLU_041217_21_3_1"/>
<dbReference type="InParanoid" id="Q68Y52"/>
<dbReference type="OMA" id="RRMAPIT"/>
<dbReference type="OrthoDB" id="8830751at2759"/>
<dbReference type="Proteomes" id="UP000000763">
    <property type="component" value="Chromosome 5"/>
</dbReference>
<dbReference type="Proteomes" id="UP000007752">
    <property type="component" value="Chromosome 5"/>
</dbReference>
<dbReference type="Proteomes" id="UP000059680">
    <property type="component" value="Chromosome 5"/>
</dbReference>
<dbReference type="ExpressionAtlas" id="Q68Y52">
    <property type="expression patterns" value="baseline and differential"/>
</dbReference>
<dbReference type="GO" id="GO:0042995">
    <property type="term" value="C:cell projection"/>
    <property type="evidence" value="ECO:0000318"/>
    <property type="project" value="GO_Central"/>
</dbReference>
<dbReference type="GO" id="GO:0031410">
    <property type="term" value="C:cytoplasmic vesicle"/>
    <property type="evidence" value="ECO:0000318"/>
    <property type="project" value="GO_Central"/>
</dbReference>
<dbReference type="GO" id="GO:0005856">
    <property type="term" value="C:cytoskeleton"/>
    <property type="evidence" value="ECO:0000318"/>
    <property type="project" value="GO_Central"/>
</dbReference>
<dbReference type="GO" id="GO:0005886">
    <property type="term" value="C:plasma membrane"/>
    <property type="evidence" value="ECO:0000318"/>
    <property type="project" value="GO_Central"/>
</dbReference>
<dbReference type="GO" id="GO:0005525">
    <property type="term" value="F:GTP binding"/>
    <property type="evidence" value="ECO:0000318"/>
    <property type="project" value="GO_Central"/>
</dbReference>
<dbReference type="GO" id="GO:0003924">
    <property type="term" value="F:GTPase activity"/>
    <property type="evidence" value="ECO:0000318"/>
    <property type="project" value="GO_Central"/>
</dbReference>
<dbReference type="GO" id="GO:0019901">
    <property type="term" value="F:protein kinase binding"/>
    <property type="evidence" value="ECO:0000318"/>
    <property type="project" value="GO_Central"/>
</dbReference>
<dbReference type="GO" id="GO:0007015">
    <property type="term" value="P:actin filament organization"/>
    <property type="evidence" value="ECO:0000318"/>
    <property type="project" value="GO_Central"/>
</dbReference>
<dbReference type="GO" id="GO:0030865">
    <property type="term" value="P:cortical cytoskeleton organization"/>
    <property type="evidence" value="ECO:0000318"/>
    <property type="project" value="GO_Central"/>
</dbReference>
<dbReference type="GO" id="GO:0007163">
    <property type="term" value="P:establishment or maintenance of cell polarity"/>
    <property type="evidence" value="ECO:0000318"/>
    <property type="project" value="GO_Central"/>
</dbReference>
<dbReference type="GO" id="GO:0032956">
    <property type="term" value="P:regulation of actin cytoskeleton organization"/>
    <property type="evidence" value="ECO:0000318"/>
    <property type="project" value="GO_Central"/>
</dbReference>
<dbReference type="GO" id="GO:0008360">
    <property type="term" value="P:regulation of cell shape"/>
    <property type="evidence" value="ECO:0000318"/>
    <property type="project" value="GO_Central"/>
</dbReference>
<dbReference type="GO" id="GO:0007165">
    <property type="term" value="P:signal transduction"/>
    <property type="evidence" value="ECO:0000318"/>
    <property type="project" value="GO_Central"/>
</dbReference>
<dbReference type="GO" id="GO:0007264">
    <property type="term" value="P:small GTPase-mediated signal transduction"/>
    <property type="evidence" value="ECO:0007669"/>
    <property type="project" value="InterPro"/>
</dbReference>
<dbReference type="CDD" id="cd04133">
    <property type="entry name" value="Rop_like"/>
    <property type="match status" value="1"/>
</dbReference>
<dbReference type="FunFam" id="3.40.50.300:FF:000797">
    <property type="entry name" value="Rac-like GTP-binding protein ARAC7"/>
    <property type="match status" value="1"/>
</dbReference>
<dbReference type="Gene3D" id="3.40.50.300">
    <property type="entry name" value="P-loop containing nucleotide triphosphate hydrolases"/>
    <property type="match status" value="1"/>
</dbReference>
<dbReference type="InterPro" id="IPR027417">
    <property type="entry name" value="P-loop_NTPase"/>
</dbReference>
<dbReference type="InterPro" id="IPR005225">
    <property type="entry name" value="Small_GTP-bd"/>
</dbReference>
<dbReference type="InterPro" id="IPR001806">
    <property type="entry name" value="Small_GTPase"/>
</dbReference>
<dbReference type="InterPro" id="IPR003578">
    <property type="entry name" value="Small_GTPase_Rho"/>
</dbReference>
<dbReference type="NCBIfam" id="TIGR00231">
    <property type="entry name" value="small_GTP"/>
    <property type="match status" value="1"/>
</dbReference>
<dbReference type="PANTHER" id="PTHR24072">
    <property type="entry name" value="RHO FAMILY GTPASE"/>
    <property type="match status" value="1"/>
</dbReference>
<dbReference type="Pfam" id="PF00071">
    <property type="entry name" value="Ras"/>
    <property type="match status" value="1"/>
</dbReference>
<dbReference type="PRINTS" id="PR00449">
    <property type="entry name" value="RASTRNSFRMNG"/>
</dbReference>
<dbReference type="SMART" id="SM00175">
    <property type="entry name" value="RAB"/>
    <property type="match status" value="1"/>
</dbReference>
<dbReference type="SMART" id="SM00176">
    <property type="entry name" value="RAN"/>
    <property type="match status" value="1"/>
</dbReference>
<dbReference type="SMART" id="SM00173">
    <property type="entry name" value="RAS"/>
    <property type="match status" value="1"/>
</dbReference>
<dbReference type="SMART" id="SM00174">
    <property type="entry name" value="RHO"/>
    <property type="match status" value="1"/>
</dbReference>
<dbReference type="SUPFAM" id="SSF52540">
    <property type="entry name" value="P-loop containing nucleoside triphosphate hydrolases"/>
    <property type="match status" value="1"/>
</dbReference>
<dbReference type="PROSITE" id="PS51420">
    <property type="entry name" value="RHO"/>
    <property type="match status" value="1"/>
</dbReference>
<protein>
    <recommendedName>
        <fullName>Rac-like GTP-binding protein 2</fullName>
    </recommendedName>
    <alternativeName>
        <fullName>OsRac2</fullName>
    </alternativeName>
</protein>
<feature type="chain" id="PRO_0000227571" description="Rac-like GTP-binding protein 2">
    <location>
        <begin position="1"/>
        <end position="214"/>
    </location>
</feature>
<feature type="short sequence motif" description="Effector region" evidence="2">
    <location>
        <begin position="36"/>
        <end position="44"/>
    </location>
</feature>
<feature type="binding site" evidence="1">
    <location>
        <begin position="14"/>
        <end position="21"/>
    </location>
    <ligand>
        <name>GTP</name>
        <dbReference type="ChEBI" id="CHEBI:37565"/>
    </ligand>
</feature>
<feature type="binding site" evidence="1">
    <location>
        <begin position="61"/>
        <end position="65"/>
    </location>
    <ligand>
        <name>GTP</name>
        <dbReference type="ChEBI" id="CHEBI:37565"/>
    </ligand>
</feature>
<feature type="binding site" evidence="1">
    <location>
        <begin position="119"/>
        <end position="122"/>
    </location>
    <ligand>
        <name>GTP</name>
        <dbReference type="ChEBI" id="CHEBI:37565"/>
    </ligand>
</feature>
<organism>
    <name type="scientific">Oryza sativa subsp. japonica</name>
    <name type="common">Rice</name>
    <dbReference type="NCBI Taxonomy" id="39947"/>
    <lineage>
        <taxon>Eukaryota</taxon>
        <taxon>Viridiplantae</taxon>
        <taxon>Streptophyta</taxon>
        <taxon>Embryophyta</taxon>
        <taxon>Tracheophyta</taxon>
        <taxon>Spermatophyta</taxon>
        <taxon>Magnoliopsida</taxon>
        <taxon>Liliopsida</taxon>
        <taxon>Poales</taxon>
        <taxon>Poaceae</taxon>
        <taxon>BOP clade</taxon>
        <taxon>Oryzoideae</taxon>
        <taxon>Oryzeae</taxon>
        <taxon>Oryzinae</taxon>
        <taxon>Oryza</taxon>
        <taxon>Oryza sativa</taxon>
    </lineage>
</organism>
<gene>
    <name type="primary">RAC2</name>
    <name type="ordered locus">Os05g0513800</name>
    <name type="ordered locus">LOC_Os05g43820</name>
    <name type="ORF">B1155G07.15</name>
    <name evidence="4" type="ORF">OsJ_19185</name>
    <name type="ORF">P0022D06.2</name>
</gene>
<comment type="function">
    <text evidence="1">Inactive GDP-bound Rho GTPases reside in the cytosol, are found in a complex with Rho GDP-dissociation inhibitors (Rho GDIs), and are released from the GDI protein in order to translocate to membranes upon activation.</text>
</comment>
<comment type="subcellular location">
    <subcellularLocation>
        <location evidence="1">Cytoplasm</location>
    </subcellularLocation>
    <subcellularLocation>
        <location evidence="1">Membrane</location>
        <topology evidence="1">Peripheral membrane protein</topology>
    </subcellularLocation>
    <text>Associated with the membrane when activated.</text>
</comment>
<comment type="PTM">
    <text>May be palmitoylated.</text>
</comment>
<comment type="similarity">
    <text evidence="3">Belongs to the small GTPase superfamily. Rho family.</text>
</comment>
<reference key="1">
    <citation type="journal article" date="1999" name="Proc. Natl. Acad. Sci. U.S.A.">
        <title>The small GTP-binding protein Rac is a regulator of cell death in plants.</title>
        <authorList>
            <person name="Kawasaki T."/>
            <person name="Henmi K."/>
            <person name="Ono E."/>
            <person name="Hatakeyama S."/>
            <person name="Iwano M."/>
            <person name="Satoh H."/>
            <person name="Shimamoto K."/>
        </authorList>
    </citation>
    <scope>NUCLEOTIDE SEQUENCE [MRNA]</scope>
    <scope>TISSUE SPECIFICITY</scope>
</reference>
<reference key="2">
    <citation type="journal article" date="2005" name="Mol. Genet. Genomics">
        <title>A fine physical map of the rice chromosome 5.</title>
        <authorList>
            <person name="Cheng C.-H."/>
            <person name="Chung M.C."/>
            <person name="Liu S.-M."/>
            <person name="Chen S.-K."/>
            <person name="Kao F.Y."/>
            <person name="Lin S.-J."/>
            <person name="Hsiao S.-H."/>
            <person name="Tseng I.C."/>
            <person name="Hsing Y.-I.C."/>
            <person name="Wu H.-P."/>
            <person name="Chen C.-S."/>
            <person name="Shaw J.-F."/>
            <person name="Wu J."/>
            <person name="Matsumoto T."/>
            <person name="Sasaki T."/>
            <person name="Chen H.-C."/>
            <person name="Chow T.-Y."/>
        </authorList>
    </citation>
    <scope>NUCLEOTIDE SEQUENCE [LARGE SCALE GENOMIC DNA]</scope>
    <source>
        <strain>cv. Nipponbare</strain>
    </source>
</reference>
<reference key="3">
    <citation type="journal article" date="2005" name="Nature">
        <title>The map-based sequence of the rice genome.</title>
        <authorList>
            <consortium name="International rice genome sequencing project (IRGSP)"/>
        </authorList>
    </citation>
    <scope>NUCLEOTIDE SEQUENCE [LARGE SCALE GENOMIC DNA]</scope>
    <source>
        <strain>cv. Nipponbare</strain>
    </source>
</reference>
<reference key="4">
    <citation type="journal article" date="2008" name="Nucleic Acids Res.">
        <title>The rice annotation project database (RAP-DB): 2008 update.</title>
        <authorList>
            <consortium name="The rice annotation project (RAP)"/>
        </authorList>
    </citation>
    <scope>GENOME REANNOTATION</scope>
    <source>
        <strain>cv. Nipponbare</strain>
    </source>
</reference>
<reference key="5">
    <citation type="journal article" date="2013" name="Rice">
        <title>Improvement of the Oryza sativa Nipponbare reference genome using next generation sequence and optical map data.</title>
        <authorList>
            <person name="Kawahara Y."/>
            <person name="de la Bastide M."/>
            <person name="Hamilton J.P."/>
            <person name="Kanamori H."/>
            <person name="McCombie W.R."/>
            <person name="Ouyang S."/>
            <person name="Schwartz D.C."/>
            <person name="Tanaka T."/>
            <person name="Wu J."/>
            <person name="Zhou S."/>
            <person name="Childs K.L."/>
            <person name="Davidson R.M."/>
            <person name="Lin H."/>
            <person name="Quesada-Ocampo L."/>
            <person name="Vaillancourt B."/>
            <person name="Sakai H."/>
            <person name="Lee S.S."/>
            <person name="Kim J."/>
            <person name="Numa H."/>
            <person name="Itoh T."/>
            <person name="Buell C.R."/>
            <person name="Matsumoto T."/>
        </authorList>
    </citation>
    <scope>GENOME REANNOTATION</scope>
    <source>
        <strain>cv. Nipponbare</strain>
    </source>
</reference>
<reference key="6">
    <citation type="journal article" date="2005" name="PLoS Biol.">
        <title>The genomes of Oryza sativa: a history of duplications.</title>
        <authorList>
            <person name="Yu J."/>
            <person name="Wang J."/>
            <person name="Lin W."/>
            <person name="Li S."/>
            <person name="Li H."/>
            <person name="Zhou J."/>
            <person name="Ni P."/>
            <person name="Dong W."/>
            <person name="Hu S."/>
            <person name="Zeng C."/>
            <person name="Zhang J."/>
            <person name="Zhang Y."/>
            <person name="Li R."/>
            <person name="Xu Z."/>
            <person name="Li S."/>
            <person name="Li X."/>
            <person name="Zheng H."/>
            <person name="Cong L."/>
            <person name="Lin L."/>
            <person name="Yin J."/>
            <person name="Geng J."/>
            <person name="Li G."/>
            <person name="Shi J."/>
            <person name="Liu J."/>
            <person name="Lv H."/>
            <person name="Li J."/>
            <person name="Wang J."/>
            <person name="Deng Y."/>
            <person name="Ran L."/>
            <person name="Shi X."/>
            <person name="Wang X."/>
            <person name="Wu Q."/>
            <person name="Li C."/>
            <person name="Ren X."/>
            <person name="Wang J."/>
            <person name="Wang X."/>
            <person name="Li D."/>
            <person name="Liu D."/>
            <person name="Zhang X."/>
            <person name="Ji Z."/>
            <person name="Zhao W."/>
            <person name="Sun Y."/>
            <person name="Zhang Z."/>
            <person name="Bao J."/>
            <person name="Han Y."/>
            <person name="Dong L."/>
            <person name="Ji J."/>
            <person name="Chen P."/>
            <person name="Wu S."/>
            <person name="Liu J."/>
            <person name="Xiao Y."/>
            <person name="Bu D."/>
            <person name="Tan J."/>
            <person name="Yang L."/>
            <person name="Ye C."/>
            <person name="Zhang J."/>
            <person name="Xu J."/>
            <person name="Zhou Y."/>
            <person name="Yu Y."/>
            <person name="Zhang B."/>
            <person name="Zhuang S."/>
            <person name="Wei H."/>
            <person name="Liu B."/>
            <person name="Lei M."/>
            <person name="Yu H."/>
            <person name="Li Y."/>
            <person name="Xu H."/>
            <person name="Wei S."/>
            <person name="He X."/>
            <person name="Fang L."/>
            <person name="Zhang Z."/>
            <person name="Zhang Y."/>
            <person name="Huang X."/>
            <person name="Su Z."/>
            <person name="Tong W."/>
            <person name="Li J."/>
            <person name="Tong Z."/>
            <person name="Li S."/>
            <person name="Ye J."/>
            <person name="Wang L."/>
            <person name="Fang L."/>
            <person name="Lei T."/>
            <person name="Chen C.-S."/>
            <person name="Chen H.-C."/>
            <person name="Xu Z."/>
            <person name="Li H."/>
            <person name="Huang H."/>
            <person name="Zhang F."/>
            <person name="Xu H."/>
            <person name="Li N."/>
            <person name="Zhao C."/>
            <person name="Li S."/>
            <person name="Dong L."/>
            <person name="Huang Y."/>
            <person name="Li L."/>
            <person name="Xi Y."/>
            <person name="Qi Q."/>
            <person name="Li W."/>
            <person name="Zhang B."/>
            <person name="Hu W."/>
            <person name="Zhang Y."/>
            <person name="Tian X."/>
            <person name="Jiao Y."/>
            <person name="Liang X."/>
            <person name="Jin J."/>
            <person name="Gao L."/>
            <person name="Zheng W."/>
            <person name="Hao B."/>
            <person name="Liu S.-M."/>
            <person name="Wang W."/>
            <person name="Yuan L."/>
            <person name="Cao M."/>
            <person name="McDermott J."/>
            <person name="Samudrala R."/>
            <person name="Wang J."/>
            <person name="Wong G.K.-S."/>
            <person name="Yang H."/>
        </authorList>
    </citation>
    <scope>NUCLEOTIDE SEQUENCE [LARGE SCALE GENOMIC DNA]</scope>
    <source>
        <strain>cv. Nipponbare</strain>
    </source>
</reference>
<reference key="7">
    <citation type="journal article" date="2005" name="Plant Physiol.">
        <title>RNA silencing of single and multiple members in a gene family of rice.</title>
        <authorList>
            <person name="Miki D."/>
            <person name="Itoh R."/>
            <person name="Shimamoto K."/>
        </authorList>
    </citation>
    <scope>NOMENCLATURE</scope>
</reference>
<name>RAC2_ORYSJ</name>
<proteinExistence type="evidence at transcript level"/>
<keyword id="KW-0963">Cytoplasm</keyword>
<keyword id="KW-0342">GTP-binding</keyword>
<keyword id="KW-0449">Lipoprotein</keyword>
<keyword id="KW-0472">Membrane</keyword>
<keyword id="KW-0547">Nucleotide-binding</keyword>
<keyword id="KW-0564">Palmitate</keyword>
<keyword id="KW-1185">Reference proteome</keyword>
<evidence type="ECO:0000250" key="1"/>
<evidence type="ECO:0000255" key="2"/>
<evidence type="ECO:0000305" key="3"/>
<evidence type="ECO:0000312" key="4">
    <source>
        <dbReference type="EMBL" id="EEE64345.1"/>
    </source>
</evidence>